<comment type="function">
    <text evidence="1">Catalyzes the NADPH-dependent reduction of L-glutamate 5-phosphate into L-glutamate 5-semialdehyde and phosphate. The product spontaneously undergoes cyclization to form 1-pyrroline-5-carboxylate.</text>
</comment>
<comment type="catalytic activity">
    <reaction evidence="1">
        <text>L-glutamate 5-semialdehyde + phosphate + NADP(+) = L-glutamyl 5-phosphate + NADPH + H(+)</text>
        <dbReference type="Rhea" id="RHEA:19541"/>
        <dbReference type="ChEBI" id="CHEBI:15378"/>
        <dbReference type="ChEBI" id="CHEBI:43474"/>
        <dbReference type="ChEBI" id="CHEBI:57783"/>
        <dbReference type="ChEBI" id="CHEBI:58066"/>
        <dbReference type="ChEBI" id="CHEBI:58274"/>
        <dbReference type="ChEBI" id="CHEBI:58349"/>
        <dbReference type="EC" id="1.2.1.41"/>
    </reaction>
</comment>
<comment type="pathway">
    <text evidence="1">Amino-acid biosynthesis; L-proline biosynthesis; L-glutamate 5-semialdehyde from L-glutamate: step 2/2.</text>
</comment>
<comment type="subcellular location">
    <subcellularLocation>
        <location evidence="1">Cytoplasm</location>
    </subcellularLocation>
</comment>
<comment type="similarity">
    <text evidence="1">Belongs to the gamma-glutamyl phosphate reductase family.</text>
</comment>
<gene>
    <name evidence="1" type="primary">proA</name>
    <name type="ordered locus">XOO2511</name>
</gene>
<accession>Q2P2G1</accession>
<organism>
    <name type="scientific">Xanthomonas oryzae pv. oryzae (strain MAFF 311018)</name>
    <dbReference type="NCBI Taxonomy" id="342109"/>
    <lineage>
        <taxon>Bacteria</taxon>
        <taxon>Pseudomonadati</taxon>
        <taxon>Pseudomonadota</taxon>
        <taxon>Gammaproteobacteria</taxon>
        <taxon>Lysobacterales</taxon>
        <taxon>Lysobacteraceae</taxon>
        <taxon>Xanthomonas</taxon>
    </lineage>
</organism>
<name>PROA_XANOM</name>
<feature type="chain" id="PRO_0000230033" description="Gamma-glutamyl phosphate reductase">
    <location>
        <begin position="1"/>
        <end position="414"/>
    </location>
</feature>
<sequence>MTIKTLALQCRDAAQVVSQLSSQAKCALLQAMAAALEADAGTILAANARDLEAARAKGTASAMLDRLALDDKRLAGIAAALREVALLPDPVGRITREDVRPNGIRVQKVRVPLGVIAMIYEARPNVTADAAALCIKAGNGVILRGGSEAIHSNIAIARALQRALREANVPEAALTLVEDLRRETMLELLQLNDIVDLAIPRGGEGLIRFVAEHARVPVIKHYKGVCHLFVDASAEMELALRLLIDGKATRPSACNSLETLLVHADIAERFLPLAAQALRERKVELRGDAATRAVLPEIAPASDDDYAAEFLDLILAMRVVADLDTALAHIRQYGSDHTEVIATQDPDNAERFVQSLRSAVVMVNASSRFSDGGELGLGAEIGISTTRLHSYGPMGLEALTVERFVVRGEGQVRH</sequence>
<evidence type="ECO:0000255" key="1">
    <source>
        <dbReference type="HAMAP-Rule" id="MF_00412"/>
    </source>
</evidence>
<proteinExistence type="inferred from homology"/>
<reference key="1">
    <citation type="journal article" date="2005" name="Jpn. Agric. Res. Q.">
        <title>Genome sequence of Xanthomonas oryzae pv. oryzae suggests contribution of large numbers of effector genes and insertion sequences to its race diversity.</title>
        <authorList>
            <person name="Ochiai H."/>
            <person name="Inoue Y."/>
            <person name="Takeya M."/>
            <person name="Sasaki A."/>
            <person name="Kaku H."/>
        </authorList>
    </citation>
    <scope>NUCLEOTIDE SEQUENCE [LARGE SCALE GENOMIC DNA]</scope>
    <source>
        <strain>MAFF 311018</strain>
    </source>
</reference>
<dbReference type="EC" id="1.2.1.41" evidence="1"/>
<dbReference type="EMBL" id="AP008229">
    <property type="protein sequence ID" value="BAE69266.1"/>
    <property type="molecule type" value="Genomic_DNA"/>
</dbReference>
<dbReference type="RefSeq" id="WP_011408714.1">
    <property type="nucleotide sequence ID" value="NC_007705.1"/>
</dbReference>
<dbReference type="SMR" id="Q2P2G1"/>
<dbReference type="KEGG" id="xom:XOO2511"/>
<dbReference type="HOGENOM" id="CLU_030231_0_0_6"/>
<dbReference type="UniPathway" id="UPA00098">
    <property type="reaction ID" value="UER00360"/>
</dbReference>
<dbReference type="GO" id="GO:0005737">
    <property type="term" value="C:cytoplasm"/>
    <property type="evidence" value="ECO:0007669"/>
    <property type="project" value="UniProtKB-SubCell"/>
</dbReference>
<dbReference type="GO" id="GO:0004350">
    <property type="term" value="F:glutamate-5-semialdehyde dehydrogenase activity"/>
    <property type="evidence" value="ECO:0007669"/>
    <property type="project" value="UniProtKB-UniRule"/>
</dbReference>
<dbReference type="GO" id="GO:0050661">
    <property type="term" value="F:NADP binding"/>
    <property type="evidence" value="ECO:0007669"/>
    <property type="project" value="InterPro"/>
</dbReference>
<dbReference type="GO" id="GO:0055129">
    <property type="term" value="P:L-proline biosynthetic process"/>
    <property type="evidence" value="ECO:0007669"/>
    <property type="project" value="UniProtKB-UniRule"/>
</dbReference>
<dbReference type="CDD" id="cd07079">
    <property type="entry name" value="ALDH_F18-19_ProA-GPR"/>
    <property type="match status" value="1"/>
</dbReference>
<dbReference type="FunFam" id="3.40.309.10:FF:000006">
    <property type="entry name" value="Gamma-glutamyl phosphate reductase"/>
    <property type="match status" value="1"/>
</dbReference>
<dbReference type="Gene3D" id="3.40.605.10">
    <property type="entry name" value="Aldehyde Dehydrogenase, Chain A, domain 1"/>
    <property type="match status" value="1"/>
</dbReference>
<dbReference type="Gene3D" id="3.40.309.10">
    <property type="entry name" value="Aldehyde Dehydrogenase, Chain A, domain 2"/>
    <property type="match status" value="1"/>
</dbReference>
<dbReference type="HAMAP" id="MF_00412">
    <property type="entry name" value="ProA"/>
    <property type="match status" value="1"/>
</dbReference>
<dbReference type="InterPro" id="IPR016161">
    <property type="entry name" value="Ald_DH/histidinol_DH"/>
</dbReference>
<dbReference type="InterPro" id="IPR016163">
    <property type="entry name" value="Ald_DH_C"/>
</dbReference>
<dbReference type="InterPro" id="IPR016162">
    <property type="entry name" value="Ald_DH_N"/>
</dbReference>
<dbReference type="InterPro" id="IPR015590">
    <property type="entry name" value="Aldehyde_DH_dom"/>
</dbReference>
<dbReference type="InterPro" id="IPR020593">
    <property type="entry name" value="G-glutamylP_reductase_CS"/>
</dbReference>
<dbReference type="InterPro" id="IPR012134">
    <property type="entry name" value="Glu-5-SA_DH"/>
</dbReference>
<dbReference type="InterPro" id="IPR000965">
    <property type="entry name" value="GPR_dom"/>
</dbReference>
<dbReference type="NCBIfam" id="NF001221">
    <property type="entry name" value="PRK00197.1"/>
    <property type="match status" value="1"/>
</dbReference>
<dbReference type="NCBIfam" id="TIGR00407">
    <property type="entry name" value="proA"/>
    <property type="match status" value="1"/>
</dbReference>
<dbReference type="PANTHER" id="PTHR11063:SF8">
    <property type="entry name" value="DELTA-1-PYRROLINE-5-CARBOXYLATE SYNTHASE"/>
    <property type="match status" value="1"/>
</dbReference>
<dbReference type="PANTHER" id="PTHR11063">
    <property type="entry name" value="GLUTAMATE SEMIALDEHYDE DEHYDROGENASE"/>
    <property type="match status" value="1"/>
</dbReference>
<dbReference type="Pfam" id="PF00171">
    <property type="entry name" value="Aldedh"/>
    <property type="match status" value="1"/>
</dbReference>
<dbReference type="PIRSF" id="PIRSF000151">
    <property type="entry name" value="GPR"/>
    <property type="match status" value="1"/>
</dbReference>
<dbReference type="SUPFAM" id="SSF53720">
    <property type="entry name" value="ALDH-like"/>
    <property type="match status" value="1"/>
</dbReference>
<dbReference type="PROSITE" id="PS01223">
    <property type="entry name" value="PROA"/>
    <property type="match status" value="1"/>
</dbReference>
<keyword id="KW-0028">Amino-acid biosynthesis</keyword>
<keyword id="KW-0963">Cytoplasm</keyword>
<keyword id="KW-0521">NADP</keyword>
<keyword id="KW-0560">Oxidoreductase</keyword>
<keyword id="KW-0641">Proline biosynthesis</keyword>
<protein>
    <recommendedName>
        <fullName evidence="1">Gamma-glutamyl phosphate reductase</fullName>
        <shortName evidence="1">GPR</shortName>
        <ecNumber evidence="1">1.2.1.41</ecNumber>
    </recommendedName>
    <alternativeName>
        <fullName evidence="1">Glutamate-5-semialdehyde dehydrogenase</fullName>
    </alternativeName>
    <alternativeName>
        <fullName evidence="1">Glutamyl-gamma-semialdehyde dehydrogenase</fullName>
        <shortName evidence="1">GSA dehydrogenase</shortName>
    </alternativeName>
</protein>